<evidence type="ECO:0000250" key="1"/>
<evidence type="ECO:0000255" key="2">
    <source>
        <dbReference type="HAMAP-Rule" id="MF_01057"/>
    </source>
</evidence>
<evidence type="ECO:0000256" key="3">
    <source>
        <dbReference type="SAM" id="MobiDB-lite"/>
    </source>
</evidence>
<reference key="1">
    <citation type="journal article" date="2003" name="Proc. Natl. Acad. Sci. U.S.A.">
        <title>The complete genome sequence of the Arabidopsis and tomato pathogen Pseudomonas syringae pv. tomato DC3000.</title>
        <authorList>
            <person name="Buell C.R."/>
            <person name="Joardar V."/>
            <person name="Lindeberg M."/>
            <person name="Selengut J."/>
            <person name="Paulsen I.T."/>
            <person name="Gwinn M.L."/>
            <person name="Dodson R.J."/>
            <person name="DeBoy R.T."/>
            <person name="Durkin A.S."/>
            <person name="Kolonay J.F."/>
            <person name="Madupu R."/>
            <person name="Daugherty S.C."/>
            <person name="Brinkac L.M."/>
            <person name="Beanan M.J."/>
            <person name="Haft D.H."/>
            <person name="Nelson W.C."/>
            <person name="Davidsen T.M."/>
            <person name="Zafar N."/>
            <person name="Zhou L."/>
            <person name="Liu J."/>
            <person name="Yuan Q."/>
            <person name="Khouri H.M."/>
            <person name="Fedorova N.B."/>
            <person name="Tran B."/>
            <person name="Russell D."/>
            <person name="Berry K.J."/>
            <person name="Utterback T.R."/>
            <person name="Van Aken S.E."/>
            <person name="Feldblyum T.V."/>
            <person name="D'Ascenzo M."/>
            <person name="Deng W.-L."/>
            <person name="Ramos A.R."/>
            <person name="Alfano J.R."/>
            <person name="Cartinhour S."/>
            <person name="Chatterjee A.K."/>
            <person name="Delaney T.P."/>
            <person name="Lazarowitz S.G."/>
            <person name="Martin G.B."/>
            <person name="Schneider D.J."/>
            <person name="Tang X."/>
            <person name="Bender C.L."/>
            <person name="White O."/>
            <person name="Fraser C.M."/>
            <person name="Collmer A."/>
        </authorList>
    </citation>
    <scope>NUCLEOTIDE SEQUENCE [LARGE SCALE GENOMIC DNA]</scope>
    <source>
        <strain>ATCC BAA-871 / DC3000</strain>
    </source>
</reference>
<feature type="chain" id="PRO_0000171378" description="tRNA (guanine-N(7)-)-methyltransferase">
    <location>
        <begin position="1"/>
        <end position="244"/>
    </location>
</feature>
<feature type="region of interest" description="Disordered" evidence="3">
    <location>
        <begin position="1"/>
        <end position="23"/>
    </location>
</feature>
<feature type="compositionally biased region" description="Pro residues" evidence="3">
    <location>
        <begin position="1"/>
        <end position="11"/>
    </location>
</feature>
<feature type="active site" evidence="1">
    <location>
        <position position="149"/>
    </location>
</feature>
<feature type="binding site" evidence="2">
    <location>
        <position position="74"/>
    </location>
    <ligand>
        <name>S-adenosyl-L-methionine</name>
        <dbReference type="ChEBI" id="CHEBI:59789"/>
    </ligand>
</feature>
<feature type="binding site" evidence="2">
    <location>
        <position position="99"/>
    </location>
    <ligand>
        <name>S-adenosyl-L-methionine</name>
        <dbReference type="ChEBI" id="CHEBI:59789"/>
    </ligand>
</feature>
<feature type="binding site" evidence="2">
    <location>
        <position position="126"/>
    </location>
    <ligand>
        <name>S-adenosyl-L-methionine</name>
        <dbReference type="ChEBI" id="CHEBI:59789"/>
    </ligand>
</feature>
<feature type="binding site" evidence="2">
    <location>
        <position position="149"/>
    </location>
    <ligand>
        <name>S-adenosyl-L-methionine</name>
        <dbReference type="ChEBI" id="CHEBI:59789"/>
    </ligand>
</feature>
<feature type="binding site" evidence="2">
    <location>
        <position position="153"/>
    </location>
    <ligand>
        <name>substrate</name>
    </ligand>
</feature>
<feature type="binding site" evidence="2">
    <location>
        <position position="185"/>
    </location>
    <ligand>
        <name>substrate</name>
    </ligand>
</feature>
<feature type="binding site" evidence="2">
    <location>
        <begin position="222"/>
        <end position="225"/>
    </location>
    <ligand>
        <name>substrate</name>
    </ligand>
</feature>
<organism>
    <name type="scientific">Pseudomonas syringae pv. tomato (strain ATCC BAA-871 / DC3000)</name>
    <dbReference type="NCBI Taxonomy" id="223283"/>
    <lineage>
        <taxon>Bacteria</taxon>
        <taxon>Pseudomonadati</taxon>
        <taxon>Pseudomonadota</taxon>
        <taxon>Gammaproteobacteria</taxon>
        <taxon>Pseudomonadales</taxon>
        <taxon>Pseudomonadaceae</taxon>
        <taxon>Pseudomonas</taxon>
    </lineage>
</organism>
<accession>Q88AF5</accession>
<proteinExistence type="inferred from homology"/>
<dbReference type="EC" id="2.1.1.33" evidence="2"/>
<dbReference type="EMBL" id="AE016853">
    <property type="protein sequence ID" value="AAO53979.1"/>
    <property type="molecule type" value="Genomic_DNA"/>
</dbReference>
<dbReference type="RefSeq" id="NP_790284.1">
    <property type="nucleotide sequence ID" value="NC_004578.1"/>
</dbReference>
<dbReference type="SMR" id="Q88AF5"/>
<dbReference type="STRING" id="223283.PSPTO_0435"/>
<dbReference type="KEGG" id="pst:PSPTO_0435"/>
<dbReference type="PATRIC" id="fig|223283.9.peg.455"/>
<dbReference type="eggNOG" id="COG0220">
    <property type="taxonomic scope" value="Bacteria"/>
</dbReference>
<dbReference type="HOGENOM" id="CLU_050910_0_1_6"/>
<dbReference type="OrthoDB" id="9802090at2"/>
<dbReference type="PhylomeDB" id="Q88AF5"/>
<dbReference type="UniPathway" id="UPA00989"/>
<dbReference type="Proteomes" id="UP000002515">
    <property type="component" value="Chromosome"/>
</dbReference>
<dbReference type="GO" id="GO:0043527">
    <property type="term" value="C:tRNA methyltransferase complex"/>
    <property type="evidence" value="ECO:0007669"/>
    <property type="project" value="TreeGrafter"/>
</dbReference>
<dbReference type="GO" id="GO:0008176">
    <property type="term" value="F:tRNA (guanine(46)-N7)-methyltransferase activity"/>
    <property type="evidence" value="ECO:0007669"/>
    <property type="project" value="UniProtKB-UniRule"/>
</dbReference>
<dbReference type="CDD" id="cd02440">
    <property type="entry name" value="AdoMet_MTases"/>
    <property type="match status" value="1"/>
</dbReference>
<dbReference type="FunFam" id="3.40.50.150:FF:000035">
    <property type="entry name" value="tRNA (guanine-N(7)-)-methyltransferase"/>
    <property type="match status" value="1"/>
</dbReference>
<dbReference type="Gene3D" id="3.40.50.150">
    <property type="entry name" value="Vaccinia Virus protein VP39"/>
    <property type="match status" value="1"/>
</dbReference>
<dbReference type="HAMAP" id="MF_01057">
    <property type="entry name" value="tRNA_methyltr_TrmB"/>
    <property type="match status" value="1"/>
</dbReference>
<dbReference type="InterPro" id="IPR029063">
    <property type="entry name" value="SAM-dependent_MTases_sf"/>
</dbReference>
<dbReference type="InterPro" id="IPR003358">
    <property type="entry name" value="tRNA_(Gua-N-7)_MeTrfase_Trmb"/>
</dbReference>
<dbReference type="InterPro" id="IPR055361">
    <property type="entry name" value="tRNA_methyltr_TrmB_bact"/>
</dbReference>
<dbReference type="NCBIfam" id="TIGR00091">
    <property type="entry name" value="tRNA (guanosine(46)-N7)-methyltransferase TrmB"/>
    <property type="match status" value="1"/>
</dbReference>
<dbReference type="PANTHER" id="PTHR23417">
    <property type="entry name" value="3-DEOXY-D-MANNO-OCTULOSONIC-ACID TRANSFERASE/TRNA GUANINE-N 7 - -METHYLTRANSFERASE"/>
    <property type="match status" value="1"/>
</dbReference>
<dbReference type="PANTHER" id="PTHR23417:SF14">
    <property type="entry name" value="PENTACOTRIPEPTIDE-REPEAT REGION OF PRORP DOMAIN-CONTAINING PROTEIN"/>
    <property type="match status" value="1"/>
</dbReference>
<dbReference type="Pfam" id="PF02390">
    <property type="entry name" value="Methyltransf_4"/>
    <property type="match status" value="1"/>
</dbReference>
<dbReference type="SUPFAM" id="SSF53335">
    <property type="entry name" value="S-adenosyl-L-methionine-dependent methyltransferases"/>
    <property type="match status" value="1"/>
</dbReference>
<dbReference type="PROSITE" id="PS51625">
    <property type="entry name" value="SAM_MT_TRMB"/>
    <property type="match status" value="1"/>
</dbReference>
<sequence>MTDTHVPPPELPAAEEGEERPHRRIKSFVMRAGRMTEGQQRGLDQGRPLFGLSLTDTPVDFDQVFGRSAPRTLEIGFGMGHSLLEMAAASPEQDFIGVEVHYPGVGAMLNGVLTQGLTNVRVYDCDAIEVLNRCIADNSLDRLMLFFPDPWHKSRHHKRRIVQPEFAALVRSKLKVGGVFHMATDWGPYAEYMLEVMSVAPGYRNQAEDNQYVPRPAERPITKFERRGEKLGHGVWDLKFEKVD</sequence>
<protein>
    <recommendedName>
        <fullName evidence="2">tRNA (guanine-N(7)-)-methyltransferase</fullName>
        <ecNumber evidence="2">2.1.1.33</ecNumber>
    </recommendedName>
    <alternativeName>
        <fullName evidence="2">tRNA (guanine(46)-N(7))-methyltransferase</fullName>
    </alternativeName>
    <alternativeName>
        <fullName evidence="2">tRNA(m7G46)-methyltransferase</fullName>
    </alternativeName>
</protein>
<keyword id="KW-0489">Methyltransferase</keyword>
<keyword id="KW-1185">Reference proteome</keyword>
<keyword id="KW-0949">S-adenosyl-L-methionine</keyword>
<keyword id="KW-0808">Transferase</keyword>
<keyword id="KW-0819">tRNA processing</keyword>
<comment type="function">
    <text evidence="2">Catalyzes the formation of N(7)-methylguanine at position 46 (m7G46) in tRNA.</text>
</comment>
<comment type="catalytic activity">
    <reaction evidence="2">
        <text>guanosine(46) in tRNA + S-adenosyl-L-methionine = N(7)-methylguanosine(46) in tRNA + S-adenosyl-L-homocysteine</text>
        <dbReference type="Rhea" id="RHEA:42708"/>
        <dbReference type="Rhea" id="RHEA-COMP:10188"/>
        <dbReference type="Rhea" id="RHEA-COMP:10189"/>
        <dbReference type="ChEBI" id="CHEBI:57856"/>
        <dbReference type="ChEBI" id="CHEBI:59789"/>
        <dbReference type="ChEBI" id="CHEBI:74269"/>
        <dbReference type="ChEBI" id="CHEBI:74480"/>
        <dbReference type="EC" id="2.1.1.33"/>
    </reaction>
</comment>
<comment type="pathway">
    <text evidence="2">tRNA modification; N(7)-methylguanine-tRNA biosynthesis.</text>
</comment>
<comment type="similarity">
    <text evidence="2">Belongs to the class I-like SAM-binding methyltransferase superfamily. TrmB family.</text>
</comment>
<name>TRMB_PSESM</name>
<gene>
    <name evidence="2" type="primary">trmB</name>
    <name type="ordered locus">PSPTO_0435</name>
</gene>